<organism>
    <name type="scientific">Corynebacterium glutamicum (strain ATCC 13032 / DSM 20300 / JCM 1318 / BCRC 11384 / CCUG 27702 / LMG 3730 / NBRC 12168 / NCIMB 10025 / NRRL B-2784 / 534)</name>
    <dbReference type="NCBI Taxonomy" id="196627"/>
    <lineage>
        <taxon>Bacteria</taxon>
        <taxon>Bacillati</taxon>
        <taxon>Actinomycetota</taxon>
        <taxon>Actinomycetes</taxon>
        <taxon>Mycobacteriales</taxon>
        <taxon>Corynebacteriaceae</taxon>
        <taxon>Corynebacterium</taxon>
    </lineage>
</organism>
<gene>
    <name evidence="1" type="primary">glyA</name>
    <name type="ordered locus">Cgl0996</name>
    <name type="ordered locus">cg1133</name>
</gene>
<keyword id="KW-0028">Amino-acid biosynthesis</keyword>
<keyword id="KW-0963">Cytoplasm</keyword>
<keyword id="KW-0554">One-carbon metabolism</keyword>
<keyword id="KW-0663">Pyridoxal phosphate</keyword>
<keyword id="KW-1185">Reference proteome</keyword>
<keyword id="KW-0808">Transferase</keyword>
<proteinExistence type="inferred from homology"/>
<name>GLYA_CORGL</name>
<accession>Q93PM7</accession>
<feature type="chain" id="PRO_0000113567" description="Serine hydroxymethyltransferase">
    <location>
        <begin position="1"/>
        <end position="434"/>
    </location>
</feature>
<feature type="binding site" evidence="1">
    <location>
        <position position="128"/>
    </location>
    <ligand>
        <name>(6S)-5,6,7,8-tetrahydrofolate</name>
        <dbReference type="ChEBI" id="CHEBI:57453"/>
    </ligand>
</feature>
<feature type="binding site" evidence="1">
    <location>
        <begin position="132"/>
        <end position="134"/>
    </location>
    <ligand>
        <name>(6S)-5,6,7,8-tetrahydrofolate</name>
        <dbReference type="ChEBI" id="CHEBI:57453"/>
    </ligand>
</feature>
<feature type="site" description="Plays an important role in substrate specificity" evidence="1">
    <location>
        <position position="236"/>
    </location>
</feature>
<feature type="modified residue" description="N6-(pyridoxal phosphate)lysine" evidence="1">
    <location>
        <position position="237"/>
    </location>
</feature>
<evidence type="ECO:0000255" key="1">
    <source>
        <dbReference type="HAMAP-Rule" id="MF_00051"/>
    </source>
</evidence>
<protein>
    <recommendedName>
        <fullName evidence="1">Serine hydroxymethyltransferase</fullName>
        <shortName evidence="1">SHMT</shortName>
        <shortName evidence="1">Serine methylase</shortName>
        <ecNumber evidence="1">2.1.2.1</ecNumber>
    </recommendedName>
</protein>
<sequence>MTDAHQADDVRYQPLNELDPEVAAAIAGELARQRDTLEMIASENFVPRSVLQAQGSVLTNKYAEGYPGRRYYGGCEQVDIIEDLARDRAKALFGAEFANVQPHSGAQANAAVLMTLAEPGDKIMGLSLAHGGHLTHGMKLNFSGKLYEVVAYGVDPETMRVDMDQVREIALKEQPKVIIAGWSAYPRHLDFEAFQSIAAEVGAKLWVDMAHFAGLVAAGLHPSPVPYSDVVSSTVHKTLGGPRSGIILAKQEYAKKLNSSVFPGQQGGPLMHAVAAKATSLKIAGTEQFRDRQARTLEGARILAERLTASDAKAAGVDVLTGGTDVHLVLADLRNSQMDGQQAEDLLHEVGITVNRNAVPFDPRPPMVTSGLRIGTPALATRGFDIPAFTEVADIIGTALANGKSADIESLRGRVAKLAADYPLYEGLEDWTIV</sequence>
<comment type="function">
    <text evidence="1">Catalyzes the reversible interconversion of serine and glycine with tetrahydrofolate (THF) serving as the one-carbon carrier. This reaction serves as the major source of one-carbon groups required for the biosynthesis of purines, thymidylate, methionine, and other important biomolecules. Also exhibits THF-independent aldolase activity toward beta-hydroxyamino acids, producing glycine and aldehydes, via a retro-aldol mechanism.</text>
</comment>
<comment type="catalytic activity">
    <reaction evidence="1">
        <text>(6R)-5,10-methylene-5,6,7,8-tetrahydrofolate + glycine + H2O = (6S)-5,6,7,8-tetrahydrofolate + L-serine</text>
        <dbReference type="Rhea" id="RHEA:15481"/>
        <dbReference type="ChEBI" id="CHEBI:15377"/>
        <dbReference type="ChEBI" id="CHEBI:15636"/>
        <dbReference type="ChEBI" id="CHEBI:33384"/>
        <dbReference type="ChEBI" id="CHEBI:57305"/>
        <dbReference type="ChEBI" id="CHEBI:57453"/>
        <dbReference type="EC" id="2.1.2.1"/>
    </reaction>
</comment>
<comment type="cofactor">
    <cofactor evidence="1">
        <name>pyridoxal 5'-phosphate</name>
        <dbReference type="ChEBI" id="CHEBI:597326"/>
    </cofactor>
</comment>
<comment type="pathway">
    <text evidence="1">One-carbon metabolism; tetrahydrofolate interconversion.</text>
</comment>
<comment type="pathway">
    <text evidence="1">Amino-acid biosynthesis; glycine biosynthesis; glycine from L-serine: step 1/1.</text>
</comment>
<comment type="subunit">
    <text evidence="1">Homodimer.</text>
</comment>
<comment type="subcellular location">
    <subcellularLocation>
        <location evidence="1">Cytoplasm</location>
    </subcellularLocation>
</comment>
<comment type="similarity">
    <text evidence="1">Belongs to the SHMT family.</text>
</comment>
<reference key="1">
    <citation type="submission" date="2000-12" db="EMBL/GenBank/DDBJ databases">
        <title>Serine hydroxymethyltransferase of Corynebacterium glutamicum.</title>
        <authorList>
            <person name="Ziegler P."/>
            <person name="Eggeling L."/>
            <person name="Sahm H."/>
        </authorList>
    </citation>
    <scope>NUCLEOTIDE SEQUENCE [GENOMIC DNA]</scope>
</reference>
<reference key="2">
    <citation type="journal article" date="2003" name="Appl. Microbiol. Biotechnol.">
        <title>The Corynebacterium glutamicum genome: features and impacts on biotechnological processes.</title>
        <authorList>
            <person name="Ikeda M."/>
            <person name="Nakagawa S."/>
        </authorList>
    </citation>
    <scope>NUCLEOTIDE SEQUENCE [LARGE SCALE GENOMIC DNA]</scope>
    <source>
        <strain>ATCC 13032 / DSM 20300 / JCM 1318 / BCRC 11384 / CCUG 27702 / LMG 3730 / NBRC 12168 / NCIMB 10025 / NRRL B-2784 / 534</strain>
    </source>
</reference>
<reference key="3">
    <citation type="journal article" date="2003" name="J. Biotechnol.">
        <title>The complete Corynebacterium glutamicum ATCC 13032 genome sequence and its impact on the production of L-aspartate-derived amino acids and vitamins.</title>
        <authorList>
            <person name="Kalinowski J."/>
            <person name="Bathe B."/>
            <person name="Bartels D."/>
            <person name="Bischoff N."/>
            <person name="Bott M."/>
            <person name="Burkovski A."/>
            <person name="Dusch N."/>
            <person name="Eggeling L."/>
            <person name="Eikmanns B.J."/>
            <person name="Gaigalat L."/>
            <person name="Goesmann A."/>
            <person name="Hartmann M."/>
            <person name="Huthmacher K."/>
            <person name="Kraemer R."/>
            <person name="Linke B."/>
            <person name="McHardy A.C."/>
            <person name="Meyer F."/>
            <person name="Moeckel B."/>
            <person name="Pfefferle W."/>
            <person name="Puehler A."/>
            <person name="Rey D.A."/>
            <person name="Rueckert C."/>
            <person name="Rupp O."/>
            <person name="Sahm H."/>
            <person name="Wendisch V.F."/>
            <person name="Wiegraebe I."/>
            <person name="Tauch A."/>
        </authorList>
    </citation>
    <scope>NUCLEOTIDE SEQUENCE [LARGE SCALE GENOMIC DNA]</scope>
    <source>
        <strain>ATCC 13032 / DSM 20300 / JCM 1318 / BCRC 11384 / CCUG 27702 / LMG 3730 / NBRC 12168 / NCIMB 10025 / NRRL B-2784 / 534</strain>
    </source>
</reference>
<dbReference type="EC" id="2.1.2.1" evidence="1"/>
<dbReference type="EMBL" id="AF327063">
    <property type="protein sequence ID" value="AAK60516.1"/>
    <property type="molecule type" value="Genomic_DNA"/>
</dbReference>
<dbReference type="EMBL" id="BA000036">
    <property type="protein sequence ID" value="BAB98389.1"/>
    <property type="molecule type" value="Genomic_DNA"/>
</dbReference>
<dbReference type="EMBL" id="BX927151">
    <property type="protein sequence ID" value="CAF19700.1"/>
    <property type="molecule type" value="Genomic_DNA"/>
</dbReference>
<dbReference type="RefSeq" id="NP_600221.1">
    <property type="nucleotide sequence ID" value="NC_003450.3"/>
</dbReference>
<dbReference type="RefSeq" id="WP_003856790.1">
    <property type="nucleotide sequence ID" value="NC_006958.1"/>
</dbReference>
<dbReference type="SMR" id="Q93PM7"/>
<dbReference type="STRING" id="196627.cg1133"/>
<dbReference type="GeneID" id="1018983"/>
<dbReference type="KEGG" id="cgb:cg1133"/>
<dbReference type="KEGG" id="cgl:Cgl0996"/>
<dbReference type="PATRIC" id="fig|196627.13.peg.978"/>
<dbReference type="eggNOG" id="COG0112">
    <property type="taxonomic scope" value="Bacteria"/>
</dbReference>
<dbReference type="HOGENOM" id="CLU_022477_2_1_11"/>
<dbReference type="OrthoDB" id="9803846at2"/>
<dbReference type="BioCyc" id="CORYNE:G18NG-10568-MONOMER"/>
<dbReference type="UniPathway" id="UPA00193"/>
<dbReference type="UniPathway" id="UPA00288">
    <property type="reaction ID" value="UER01023"/>
</dbReference>
<dbReference type="Proteomes" id="UP000000582">
    <property type="component" value="Chromosome"/>
</dbReference>
<dbReference type="Proteomes" id="UP000001009">
    <property type="component" value="Chromosome"/>
</dbReference>
<dbReference type="GO" id="GO:0005829">
    <property type="term" value="C:cytosol"/>
    <property type="evidence" value="ECO:0007669"/>
    <property type="project" value="TreeGrafter"/>
</dbReference>
<dbReference type="GO" id="GO:0004372">
    <property type="term" value="F:glycine hydroxymethyltransferase activity"/>
    <property type="evidence" value="ECO:0007669"/>
    <property type="project" value="UniProtKB-UniRule"/>
</dbReference>
<dbReference type="GO" id="GO:0030170">
    <property type="term" value="F:pyridoxal phosphate binding"/>
    <property type="evidence" value="ECO:0007669"/>
    <property type="project" value="UniProtKB-UniRule"/>
</dbReference>
<dbReference type="GO" id="GO:0019264">
    <property type="term" value="P:glycine biosynthetic process from serine"/>
    <property type="evidence" value="ECO:0007669"/>
    <property type="project" value="UniProtKB-UniRule"/>
</dbReference>
<dbReference type="GO" id="GO:0035999">
    <property type="term" value="P:tetrahydrofolate interconversion"/>
    <property type="evidence" value="ECO:0007669"/>
    <property type="project" value="UniProtKB-UniRule"/>
</dbReference>
<dbReference type="CDD" id="cd00378">
    <property type="entry name" value="SHMT"/>
    <property type="match status" value="1"/>
</dbReference>
<dbReference type="FunFam" id="3.40.640.10:FF:000001">
    <property type="entry name" value="Serine hydroxymethyltransferase"/>
    <property type="match status" value="1"/>
</dbReference>
<dbReference type="Gene3D" id="3.90.1150.10">
    <property type="entry name" value="Aspartate Aminotransferase, domain 1"/>
    <property type="match status" value="1"/>
</dbReference>
<dbReference type="Gene3D" id="3.40.640.10">
    <property type="entry name" value="Type I PLP-dependent aspartate aminotransferase-like (Major domain)"/>
    <property type="match status" value="1"/>
</dbReference>
<dbReference type="HAMAP" id="MF_00051">
    <property type="entry name" value="SHMT"/>
    <property type="match status" value="1"/>
</dbReference>
<dbReference type="InterPro" id="IPR015424">
    <property type="entry name" value="PyrdxlP-dep_Trfase"/>
</dbReference>
<dbReference type="InterPro" id="IPR015421">
    <property type="entry name" value="PyrdxlP-dep_Trfase_major"/>
</dbReference>
<dbReference type="InterPro" id="IPR015422">
    <property type="entry name" value="PyrdxlP-dep_Trfase_small"/>
</dbReference>
<dbReference type="InterPro" id="IPR001085">
    <property type="entry name" value="Ser_HO-MeTrfase"/>
</dbReference>
<dbReference type="InterPro" id="IPR049943">
    <property type="entry name" value="Ser_HO-MeTrfase-like"/>
</dbReference>
<dbReference type="InterPro" id="IPR019798">
    <property type="entry name" value="Ser_HO-MeTrfase_PLP_BS"/>
</dbReference>
<dbReference type="InterPro" id="IPR039429">
    <property type="entry name" value="SHMT-like_dom"/>
</dbReference>
<dbReference type="NCBIfam" id="NF000586">
    <property type="entry name" value="PRK00011.1"/>
    <property type="match status" value="1"/>
</dbReference>
<dbReference type="PANTHER" id="PTHR11680">
    <property type="entry name" value="SERINE HYDROXYMETHYLTRANSFERASE"/>
    <property type="match status" value="1"/>
</dbReference>
<dbReference type="PANTHER" id="PTHR11680:SF35">
    <property type="entry name" value="SERINE HYDROXYMETHYLTRANSFERASE 1"/>
    <property type="match status" value="1"/>
</dbReference>
<dbReference type="Pfam" id="PF00464">
    <property type="entry name" value="SHMT"/>
    <property type="match status" value="1"/>
</dbReference>
<dbReference type="PIRSF" id="PIRSF000412">
    <property type="entry name" value="SHMT"/>
    <property type="match status" value="1"/>
</dbReference>
<dbReference type="SUPFAM" id="SSF53383">
    <property type="entry name" value="PLP-dependent transferases"/>
    <property type="match status" value="1"/>
</dbReference>
<dbReference type="PROSITE" id="PS00096">
    <property type="entry name" value="SHMT"/>
    <property type="match status" value="1"/>
</dbReference>